<organism>
    <name type="scientific">Desulfatibacillum aliphaticivorans</name>
    <dbReference type="NCBI Taxonomy" id="218208"/>
    <lineage>
        <taxon>Bacteria</taxon>
        <taxon>Pseudomonadati</taxon>
        <taxon>Thermodesulfobacteriota</taxon>
        <taxon>Desulfobacteria</taxon>
        <taxon>Desulfobacterales</taxon>
        <taxon>Desulfatibacillaceae</taxon>
        <taxon>Desulfatibacillum</taxon>
    </lineage>
</organism>
<name>HIS3_DESAL</name>
<accession>B8FLE7</accession>
<reference key="1">
    <citation type="journal article" date="2012" name="Environ. Microbiol.">
        <title>The genome sequence of Desulfatibacillum alkenivorans AK-01: a blueprint for anaerobic alkane oxidation.</title>
        <authorList>
            <person name="Callaghan A.V."/>
            <person name="Morris B.E."/>
            <person name="Pereira I.A."/>
            <person name="McInerney M.J."/>
            <person name="Austin R.N."/>
            <person name="Groves J.T."/>
            <person name="Kukor J.J."/>
            <person name="Suflita J.M."/>
            <person name="Young L.Y."/>
            <person name="Zylstra G.J."/>
            <person name="Wawrik B."/>
        </authorList>
    </citation>
    <scope>NUCLEOTIDE SEQUENCE [LARGE SCALE GENOMIC DNA]</scope>
    <source>
        <strain>AK-01</strain>
    </source>
</reference>
<evidence type="ECO:0000255" key="1">
    <source>
        <dbReference type="HAMAP-Rule" id="MF_01021"/>
    </source>
</evidence>
<proteinExistence type="inferred from homology"/>
<comment type="function">
    <text evidence="1">Catalyzes the hydrolysis of the adenine ring of phosphoribosyl-AMP.</text>
</comment>
<comment type="catalytic activity">
    <reaction evidence="1">
        <text>1-(5-phospho-beta-D-ribosyl)-5'-AMP + H2O = 1-(5-phospho-beta-D-ribosyl)-5-[(5-phospho-beta-D-ribosylamino)methylideneamino]imidazole-4-carboxamide</text>
        <dbReference type="Rhea" id="RHEA:20049"/>
        <dbReference type="ChEBI" id="CHEBI:15377"/>
        <dbReference type="ChEBI" id="CHEBI:58435"/>
        <dbReference type="ChEBI" id="CHEBI:59457"/>
        <dbReference type="EC" id="3.5.4.19"/>
    </reaction>
</comment>
<comment type="cofactor">
    <cofactor evidence="1">
        <name>Mg(2+)</name>
        <dbReference type="ChEBI" id="CHEBI:18420"/>
    </cofactor>
    <text evidence="1">Binds 1 Mg(2+) ion per subunit.</text>
</comment>
<comment type="cofactor">
    <cofactor evidence="1">
        <name>Zn(2+)</name>
        <dbReference type="ChEBI" id="CHEBI:29105"/>
    </cofactor>
    <text evidence="1">Binds 1 zinc ion per subunit.</text>
</comment>
<comment type="pathway">
    <text evidence="1">Amino-acid biosynthesis; L-histidine biosynthesis; L-histidine from 5-phospho-alpha-D-ribose 1-diphosphate: step 3/9.</text>
</comment>
<comment type="subunit">
    <text evidence="1">Homodimer.</text>
</comment>
<comment type="subcellular location">
    <subcellularLocation>
        <location evidence="1">Cytoplasm</location>
    </subcellularLocation>
</comment>
<comment type="similarity">
    <text evidence="1">Belongs to the PRA-CH family.</text>
</comment>
<sequence>MIELDFEKTGGLLPAICQDAETGEVLMLAFMNKESWEKTLETGMATYWSRSRQELWTKGLTSGNVQKVKEIRVDCDDDTILLKVEQIGGAACHTGHRSCFHKLVEGDKLTVVGEPVFDPKEVYKK</sequence>
<gene>
    <name evidence="1" type="primary">hisI</name>
    <name type="ordered locus">Dalk_3405</name>
</gene>
<dbReference type="EC" id="3.5.4.19" evidence="1"/>
<dbReference type="EMBL" id="CP001322">
    <property type="protein sequence ID" value="ACL05093.1"/>
    <property type="molecule type" value="Genomic_DNA"/>
</dbReference>
<dbReference type="SMR" id="B8FLE7"/>
<dbReference type="KEGG" id="dal:Dalk_3405"/>
<dbReference type="eggNOG" id="COG0139">
    <property type="taxonomic scope" value="Bacteria"/>
</dbReference>
<dbReference type="HOGENOM" id="CLU_048577_5_0_7"/>
<dbReference type="UniPathway" id="UPA00031">
    <property type="reaction ID" value="UER00008"/>
</dbReference>
<dbReference type="Proteomes" id="UP000000739">
    <property type="component" value="Chromosome"/>
</dbReference>
<dbReference type="GO" id="GO:0005737">
    <property type="term" value="C:cytoplasm"/>
    <property type="evidence" value="ECO:0007669"/>
    <property type="project" value="UniProtKB-SubCell"/>
</dbReference>
<dbReference type="GO" id="GO:0000287">
    <property type="term" value="F:magnesium ion binding"/>
    <property type="evidence" value="ECO:0007669"/>
    <property type="project" value="UniProtKB-UniRule"/>
</dbReference>
<dbReference type="GO" id="GO:0004635">
    <property type="term" value="F:phosphoribosyl-AMP cyclohydrolase activity"/>
    <property type="evidence" value="ECO:0007669"/>
    <property type="project" value="UniProtKB-UniRule"/>
</dbReference>
<dbReference type="GO" id="GO:0008270">
    <property type="term" value="F:zinc ion binding"/>
    <property type="evidence" value="ECO:0007669"/>
    <property type="project" value="UniProtKB-UniRule"/>
</dbReference>
<dbReference type="GO" id="GO:0000105">
    <property type="term" value="P:L-histidine biosynthetic process"/>
    <property type="evidence" value="ECO:0007669"/>
    <property type="project" value="UniProtKB-UniRule"/>
</dbReference>
<dbReference type="FunFam" id="3.10.20.810:FF:000001">
    <property type="entry name" value="Histidine biosynthesis bifunctional protein HisIE"/>
    <property type="match status" value="1"/>
</dbReference>
<dbReference type="Gene3D" id="4.10.80.70">
    <property type="match status" value="1"/>
</dbReference>
<dbReference type="Gene3D" id="3.10.20.810">
    <property type="entry name" value="Phosphoribosyl-AMP cyclohydrolase"/>
    <property type="match status" value="1"/>
</dbReference>
<dbReference type="HAMAP" id="MF_01021">
    <property type="entry name" value="HisI"/>
    <property type="match status" value="1"/>
</dbReference>
<dbReference type="InterPro" id="IPR026660">
    <property type="entry name" value="PRA-CH"/>
</dbReference>
<dbReference type="InterPro" id="IPR002496">
    <property type="entry name" value="PRib_AMP_CycHydrolase_dom"/>
</dbReference>
<dbReference type="InterPro" id="IPR038019">
    <property type="entry name" value="PRib_AMP_CycHydrolase_sf"/>
</dbReference>
<dbReference type="NCBIfam" id="NF000768">
    <property type="entry name" value="PRK00051.1"/>
    <property type="match status" value="1"/>
</dbReference>
<dbReference type="PANTHER" id="PTHR42945">
    <property type="entry name" value="HISTIDINE BIOSYNTHESIS BIFUNCTIONAL PROTEIN"/>
    <property type="match status" value="1"/>
</dbReference>
<dbReference type="PANTHER" id="PTHR42945:SF1">
    <property type="entry name" value="HISTIDINE BIOSYNTHESIS BIFUNCTIONAL PROTEIN HIS7"/>
    <property type="match status" value="1"/>
</dbReference>
<dbReference type="Pfam" id="PF01502">
    <property type="entry name" value="PRA-CH"/>
    <property type="match status" value="1"/>
</dbReference>
<dbReference type="SUPFAM" id="SSF141734">
    <property type="entry name" value="HisI-like"/>
    <property type="match status" value="1"/>
</dbReference>
<keyword id="KW-0028">Amino-acid biosynthesis</keyword>
<keyword id="KW-0963">Cytoplasm</keyword>
<keyword id="KW-0368">Histidine biosynthesis</keyword>
<keyword id="KW-0378">Hydrolase</keyword>
<keyword id="KW-0460">Magnesium</keyword>
<keyword id="KW-0479">Metal-binding</keyword>
<keyword id="KW-1185">Reference proteome</keyword>
<keyword id="KW-0862">Zinc</keyword>
<feature type="chain" id="PRO_1000149069" description="Phosphoribosyl-AMP cyclohydrolase">
    <location>
        <begin position="1"/>
        <end position="125"/>
    </location>
</feature>
<feature type="binding site" evidence="1">
    <location>
        <position position="74"/>
    </location>
    <ligand>
        <name>Mg(2+)</name>
        <dbReference type="ChEBI" id="CHEBI:18420"/>
    </ligand>
</feature>
<feature type="binding site" evidence="1">
    <location>
        <position position="75"/>
    </location>
    <ligand>
        <name>Zn(2+)</name>
        <dbReference type="ChEBI" id="CHEBI:29105"/>
        <note>ligand shared between dimeric partners</note>
    </ligand>
</feature>
<feature type="binding site" evidence="1">
    <location>
        <position position="76"/>
    </location>
    <ligand>
        <name>Mg(2+)</name>
        <dbReference type="ChEBI" id="CHEBI:18420"/>
    </ligand>
</feature>
<feature type="binding site" evidence="1">
    <location>
        <position position="78"/>
    </location>
    <ligand>
        <name>Mg(2+)</name>
        <dbReference type="ChEBI" id="CHEBI:18420"/>
    </ligand>
</feature>
<feature type="binding site" evidence="1">
    <location>
        <position position="92"/>
    </location>
    <ligand>
        <name>Zn(2+)</name>
        <dbReference type="ChEBI" id="CHEBI:29105"/>
        <note>ligand shared between dimeric partners</note>
    </ligand>
</feature>
<feature type="binding site" evidence="1">
    <location>
        <position position="99"/>
    </location>
    <ligand>
        <name>Zn(2+)</name>
        <dbReference type="ChEBI" id="CHEBI:29105"/>
        <note>ligand shared between dimeric partners</note>
    </ligand>
</feature>
<protein>
    <recommendedName>
        <fullName evidence="1">Phosphoribosyl-AMP cyclohydrolase</fullName>
        <shortName evidence="1">PRA-CH</shortName>
        <ecNumber evidence="1">3.5.4.19</ecNumber>
    </recommendedName>
</protein>